<reference key="1">
    <citation type="journal article" date="2013" name="Biomaterials">
        <title>Design of histidine-rich peptides with enhanced bioavailability and inhibitory activity against hepatitis C virus.</title>
        <authorList>
            <person name="Hong W."/>
            <person name="Zhang R."/>
            <person name="Di Z."/>
            <person name="He Y."/>
            <person name="Zhao Z."/>
            <person name="Hu J."/>
            <person name="Wu Y."/>
            <person name="Li W."/>
            <person name="Cao Z."/>
        </authorList>
    </citation>
    <scope>NUCLEOTIDE SEQUENCE [MRNA]</scope>
    <scope>SYNTHESIS OF 23-41</scope>
    <source>
        <tissue>Venom gland</tissue>
    </source>
</reference>
<reference key="2">
    <citation type="journal article" date="2012" name="J. Biol. Chem.">
        <title>Mucroporin-M1 inhibits hepatitis B virus replication by activating the mitogen-activated protein kinase (MAPK) pathway and down-regulating HNF4alpha in vitro and in vivo.</title>
        <authorList>
            <person name="Zhao Z."/>
            <person name="Hong W."/>
            <person name="Zeng Z."/>
            <person name="Wu Y."/>
            <person name="Hu K."/>
            <person name="Tian X."/>
            <person name="Li W."/>
            <person name="Cao Z."/>
        </authorList>
    </citation>
    <scope>SYNTHESIS OF 24-41</scope>
</reference>
<evidence type="ECO:0000250" key="1"/>
<evidence type="ECO:0000255" key="2"/>
<evidence type="ECO:0000303" key="3">
    <source>
    </source>
</evidence>
<evidence type="ECO:0000303" key="4">
    <source>
    </source>
</evidence>
<evidence type="ECO:0000305" key="5"/>
<evidence type="ECO:0000305" key="6">
    <source>
    </source>
</evidence>
<evidence type="ECO:0000305" key="7">
    <source>
    </source>
</evidence>
<sequence length="75" mass="8894">MNSKYLFVFLILNVIFIDLCQGFLWSLIPSAISAVTSLIKKGRRRRELGSQYDYLQDFRKRELDLDDLLSKFPDY</sequence>
<proteinExistence type="inferred from homology"/>
<name>NDB4T_CHATC</name>
<feature type="signal peptide" evidence="2">
    <location>
        <begin position="1"/>
        <end position="22"/>
    </location>
</feature>
<feature type="peptide" id="PRO_0000428679" description="Peptide Ctri10036">
    <location>
        <begin position="23"/>
        <end position="41"/>
    </location>
</feature>
<feature type="propeptide" id="PRO_0000428680" evidence="1">
    <location>
        <begin position="47"/>
        <end position="75"/>
    </location>
</feature>
<feature type="modified residue" description="Lysine amide" evidence="1">
    <location>
        <position position="41"/>
    </location>
</feature>
<organism>
    <name type="scientific">Chaerilus tricostatus</name>
    <name type="common">Scorpion</name>
    <dbReference type="NCBI Taxonomy" id="1055734"/>
    <lineage>
        <taxon>Eukaryota</taxon>
        <taxon>Metazoa</taxon>
        <taxon>Ecdysozoa</taxon>
        <taxon>Arthropoda</taxon>
        <taxon>Chelicerata</taxon>
        <taxon>Arachnida</taxon>
        <taxon>Scorpiones</taxon>
        <taxon>Chaerilida</taxon>
        <taxon>Chaeriloidea</taxon>
        <taxon>Chaerilidae</taxon>
        <taxon>Chaerilus</taxon>
    </lineage>
</organism>
<accession>P0DME3</accession>
<keyword id="KW-0027">Amidation</keyword>
<keyword id="KW-0929">Antimicrobial</keyword>
<keyword id="KW-0930">Antiviral protein</keyword>
<keyword id="KW-0964">Secreted</keyword>
<keyword id="KW-0732">Signal</keyword>
<comment type="subcellular location">
    <subcellularLocation>
        <location evidence="1">Secreted</location>
    </subcellularLocation>
</comment>
<comment type="tissue specificity">
    <text evidence="5">Expressed by the venom gland.</text>
</comment>
<comment type="miscellaneous">
    <text evidence="6 7">Shows a low ability to inhibit hepatitis C virus (HCV) infection in Huh7.5.1 cells (PubMed:23415044), and no ability to inhibit hepatitis B virus in HepG2.2.15 cells (PubMed:22791717).</text>
</comment>
<comment type="similarity">
    <text evidence="5">Belongs to the non-disulfide-bridged peptide (NDBP) superfamily. Short antimicrobial peptide (group 4) family.</text>
</comment>
<dbReference type="GO" id="GO:0005576">
    <property type="term" value="C:extracellular region"/>
    <property type="evidence" value="ECO:0007669"/>
    <property type="project" value="UniProtKB-SubCell"/>
</dbReference>
<dbReference type="GO" id="GO:0050688">
    <property type="term" value="P:regulation of defense response to virus"/>
    <property type="evidence" value="ECO:0007669"/>
    <property type="project" value="UniProtKB-KW"/>
</dbReference>
<protein>
    <recommendedName>
        <fullName evidence="3 4">Peptide Ctri10036</fullName>
    </recommendedName>
</protein>